<accession>A5D5G6</accession>
<proteinExistence type="inferred from homology"/>
<protein>
    <recommendedName>
        <fullName evidence="1">Large ribosomal subunit protein uL24</fullName>
    </recommendedName>
    <alternativeName>
        <fullName evidence="2">50S ribosomal protein L24</fullName>
    </alternativeName>
</protein>
<sequence length="107" mass="11664">MARTKVHVRKGDTVLVITGKNAGKKGKVISVIPAKSRVVVEGVNVVKRHTKPTRKMPQGGIVEKEAPIHSSNVMLFCGKCNSPTRVGKKFLEDGEKVRVCKRCGETI</sequence>
<name>RL24_PELTS</name>
<organism>
    <name type="scientific">Pelotomaculum thermopropionicum (strain DSM 13744 / JCM 10971 / SI)</name>
    <dbReference type="NCBI Taxonomy" id="370438"/>
    <lineage>
        <taxon>Bacteria</taxon>
        <taxon>Bacillati</taxon>
        <taxon>Bacillota</taxon>
        <taxon>Clostridia</taxon>
        <taxon>Eubacteriales</taxon>
        <taxon>Desulfotomaculaceae</taxon>
        <taxon>Pelotomaculum</taxon>
    </lineage>
</organism>
<comment type="function">
    <text evidence="1">One of two assembly initiator proteins, it binds directly to the 5'-end of the 23S rRNA, where it nucleates assembly of the 50S subunit.</text>
</comment>
<comment type="function">
    <text evidence="1">One of the proteins that surrounds the polypeptide exit tunnel on the outside of the subunit.</text>
</comment>
<comment type="subunit">
    <text evidence="1">Part of the 50S ribosomal subunit.</text>
</comment>
<comment type="similarity">
    <text evidence="1">Belongs to the universal ribosomal protein uL24 family.</text>
</comment>
<keyword id="KW-1185">Reference proteome</keyword>
<keyword id="KW-0687">Ribonucleoprotein</keyword>
<keyword id="KW-0689">Ribosomal protein</keyword>
<keyword id="KW-0694">RNA-binding</keyword>
<keyword id="KW-0699">rRNA-binding</keyword>
<evidence type="ECO:0000255" key="1">
    <source>
        <dbReference type="HAMAP-Rule" id="MF_01326"/>
    </source>
</evidence>
<evidence type="ECO:0000305" key="2"/>
<feature type="chain" id="PRO_0000355705" description="Large ribosomal subunit protein uL24">
    <location>
        <begin position="1"/>
        <end position="107"/>
    </location>
</feature>
<reference key="1">
    <citation type="journal article" date="2008" name="Genome Res.">
        <title>The genome of Pelotomaculum thermopropionicum reveals niche-associated evolution in anaerobic microbiota.</title>
        <authorList>
            <person name="Kosaka T."/>
            <person name="Kato S."/>
            <person name="Shimoyama T."/>
            <person name="Ishii S."/>
            <person name="Abe T."/>
            <person name="Watanabe K."/>
        </authorList>
    </citation>
    <scope>NUCLEOTIDE SEQUENCE [LARGE SCALE GENOMIC DNA]</scope>
    <source>
        <strain>DSM 13744 / JCM 10971 / SI</strain>
    </source>
</reference>
<gene>
    <name evidence="1" type="primary">rplX</name>
    <name type="ordered locus">PTH_0331</name>
</gene>
<dbReference type="EMBL" id="AP009389">
    <property type="protein sequence ID" value="BAF58512.1"/>
    <property type="molecule type" value="Genomic_DNA"/>
</dbReference>
<dbReference type="SMR" id="A5D5G6"/>
<dbReference type="STRING" id="370438.PTH_0331"/>
<dbReference type="KEGG" id="pth:PTH_0331"/>
<dbReference type="eggNOG" id="COG0198">
    <property type="taxonomic scope" value="Bacteria"/>
</dbReference>
<dbReference type="HOGENOM" id="CLU_093315_2_0_9"/>
<dbReference type="Proteomes" id="UP000006556">
    <property type="component" value="Chromosome"/>
</dbReference>
<dbReference type="GO" id="GO:1990904">
    <property type="term" value="C:ribonucleoprotein complex"/>
    <property type="evidence" value="ECO:0007669"/>
    <property type="project" value="UniProtKB-KW"/>
</dbReference>
<dbReference type="GO" id="GO:0005840">
    <property type="term" value="C:ribosome"/>
    <property type="evidence" value="ECO:0007669"/>
    <property type="project" value="UniProtKB-KW"/>
</dbReference>
<dbReference type="GO" id="GO:0019843">
    <property type="term" value="F:rRNA binding"/>
    <property type="evidence" value="ECO:0007669"/>
    <property type="project" value="UniProtKB-UniRule"/>
</dbReference>
<dbReference type="GO" id="GO:0003735">
    <property type="term" value="F:structural constituent of ribosome"/>
    <property type="evidence" value="ECO:0007669"/>
    <property type="project" value="InterPro"/>
</dbReference>
<dbReference type="GO" id="GO:0006412">
    <property type="term" value="P:translation"/>
    <property type="evidence" value="ECO:0007669"/>
    <property type="project" value="UniProtKB-UniRule"/>
</dbReference>
<dbReference type="CDD" id="cd06089">
    <property type="entry name" value="KOW_RPL26"/>
    <property type="match status" value="1"/>
</dbReference>
<dbReference type="FunFam" id="2.30.30.30:FF:000004">
    <property type="entry name" value="50S ribosomal protein L24"/>
    <property type="match status" value="1"/>
</dbReference>
<dbReference type="Gene3D" id="2.30.30.30">
    <property type="match status" value="1"/>
</dbReference>
<dbReference type="HAMAP" id="MF_01326_B">
    <property type="entry name" value="Ribosomal_uL24_B"/>
    <property type="match status" value="1"/>
</dbReference>
<dbReference type="InterPro" id="IPR005824">
    <property type="entry name" value="KOW"/>
</dbReference>
<dbReference type="InterPro" id="IPR014722">
    <property type="entry name" value="Rib_uL2_dom2"/>
</dbReference>
<dbReference type="InterPro" id="IPR003256">
    <property type="entry name" value="Ribosomal_uL24"/>
</dbReference>
<dbReference type="InterPro" id="IPR005825">
    <property type="entry name" value="Ribosomal_uL24_CS"/>
</dbReference>
<dbReference type="InterPro" id="IPR041988">
    <property type="entry name" value="Ribosomal_uL24_KOW"/>
</dbReference>
<dbReference type="InterPro" id="IPR008991">
    <property type="entry name" value="Translation_prot_SH3-like_sf"/>
</dbReference>
<dbReference type="NCBIfam" id="TIGR01079">
    <property type="entry name" value="rplX_bact"/>
    <property type="match status" value="1"/>
</dbReference>
<dbReference type="PANTHER" id="PTHR12903">
    <property type="entry name" value="MITOCHONDRIAL RIBOSOMAL PROTEIN L24"/>
    <property type="match status" value="1"/>
</dbReference>
<dbReference type="Pfam" id="PF00467">
    <property type="entry name" value="KOW"/>
    <property type="match status" value="1"/>
</dbReference>
<dbReference type="Pfam" id="PF17136">
    <property type="entry name" value="ribosomal_L24"/>
    <property type="match status" value="1"/>
</dbReference>
<dbReference type="SMART" id="SM00739">
    <property type="entry name" value="KOW"/>
    <property type="match status" value="1"/>
</dbReference>
<dbReference type="SUPFAM" id="SSF50104">
    <property type="entry name" value="Translation proteins SH3-like domain"/>
    <property type="match status" value="1"/>
</dbReference>
<dbReference type="PROSITE" id="PS01108">
    <property type="entry name" value="RIBOSOMAL_L24"/>
    <property type="match status" value="1"/>
</dbReference>